<comment type="catalytic activity">
    <reaction evidence="1">
        <text>tRNA(Gly) + glycine + ATP = glycyl-tRNA(Gly) + AMP + diphosphate</text>
        <dbReference type="Rhea" id="RHEA:16013"/>
        <dbReference type="Rhea" id="RHEA-COMP:9664"/>
        <dbReference type="Rhea" id="RHEA-COMP:9683"/>
        <dbReference type="ChEBI" id="CHEBI:30616"/>
        <dbReference type="ChEBI" id="CHEBI:33019"/>
        <dbReference type="ChEBI" id="CHEBI:57305"/>
        <dbReference type="ChEBI" id="CHEBI:78442"/>
        <dbReference type="ChEBI" id="CHEBI:78522"/>
        <dbReference type="ChEBI" id="CHEBI:456215"/>
        <dbReference type="EC" id="6.1.1.14"/>
    </reaction>
</comment>
<comment type="subunit">
    <text evidence="1">Tetramer of two alpha and two beta subunits.</text>
</comment>
<comment type="subcellular location">
    <subcellularLocation>
        <location evidence="1">Cytoplasm</location>
    </subcellularLocation>
</comment>
<comment type="similarity">
    <text evidence="1">Belongs to the class-II aminoacyl-tRNA synthetase family.</text>
</comment>
<name>SYGA_SERP5</name>
<feature type="chain" id="PRO_1000059057" description="Glycine--tRNA ligase alpha subunit">
    <location>
        <begin position="1"/>
        <end position="304"/>
    </location>
</feature>
<organism>
    <name type="scientific">Serratia proteamaculans (strain 568)</name>
    <dbReference type="NCBI Taxonomy" id="399741"/>
    <lineage>
        <taxon>Bacteria</taxon>
        <taxon>Pseudomonadati</taxon>
        <taxon>Pseudomonadota</taxon>
        <taxon>Gammaproteobacteria</taxon>
        <taxon>Enterobacterales</taxon>
        <taxon>Yersiniaceae</taxon>
        <taxon>Serratia</taxon>
    </lineage>
</organism>
<protein>
    <recommendedName>
        <fullName evidence="1">Glycine--tRNA ligase alpha subunit</fullName>
        <ecNumber evidence="1">6.1.1.14</ecNumber>
    </recommendedName>
    <alternativeName>
        <fullName evidence="1">Glycyl-tRNA synthetase alpha subunit</fullName>
        <shortName evidence="1">GlyRS</shortName>
    </alternativeName>
</protein>
<keyword id="KW-0030">Aminoacyl-tRNA synthetase</keyword>
<keyword id="KW-0067">ATP-binding</keyword>
<keyword id="KW-0963">Cytoplasm</keyword>
<keyword id="KW-0436">Ligase</keyword>
<keyword id="KW-0547">Nucleotide-binding</keyword>
<keyword id="KW-0648">Protein biosynthesis</keyword>
<sequence>MQKFDTKTFQGLILTLQDYWARQGCTIVQPLDMEVGAGTSHPMTCLRALGPEPMATAYVQPSRRPTDGRYGENPNRLQHYYQFQVVIKPSPDNIQELYLGSLKELGLDPTIHDIRFVEDNWENPTLGAWGLGWEVWLNGMEVTQFTYFQQVGGMECKPVTGEITYGLERLAMYIQGVDSVYDLVWSDGPLGVTTYGDVFHQNEVEQSTYNFEYADVDFLFSCFEQYEKEAQSLLALEKPLPLPAYERILKAGHTFNLLDARKAISVTERQRYILRIRTLTKAVAEAYYASREALGFPMCKKNKS</sequence>
<gene>
    <name evidence="1" type="primary">glyQ</name>
    <name type="ordered locus">Spro_0069</name>
</gene>
<reference key="1">
    <citation type="submission" date="2007-09" db="EMBL/GenBank/DDBJ databases">
        <title>Complete sequence of chromosome of Serratia proteamaculans 568.</title>
        <authorList>
            <consortium name="US DOE Joint Genome Institute"/>
            <person name="Copeland A."/>
            <person name="Lucas S."/>
            <person name="Lapidus A."/>
            <person name="Barry K."/>
            <person name="Glavina del Rio T."/>
            <person name="Dalin E."/>
            <person name="Tice H."/>
            <person name="Pitluck S."/>
            <person name="Chain P."/>
            <person name="Malfatti S."/>
            <person name="Shin M."/>
            <person name="Vergez L."/>
            <person name="Schmutz J."/>
            <person name="Larimer F."/>
            <person name="Land M."/>
            <person name="Hauser L."/>
            <person name="Kyrpides N."/>
            <person name="Kim E."/>
            <person name="Taghavi S."/>
            <person name="Newman L."/>
            <person name="Vangronsveld J."/>
            <person name="van der Lelie D."/>
            <person name="Richardson P."/>
        </authorList>
    </citation>
    <scope>NUCLEOTIDE SEQUENCE [LARGE SCALE GENOMIC DNA]</scope>
    <source>
        <strain>568</strain>
    </source>
</reference>
<dbReference type="EC" id="6.1.1.14" evidence="1"/>
<dbReference type="EMBL" id="CP000826">
    <property type="protein sequence ID" value="ABV39179.1"/>
    <property type="molecule type" value="Genomic_DNA"/>
</dbReference>
<dbReference type="SMR" id="A8G7T9"/>
<dbReference type="STRING" id="399741.Spro_0069"/>
<dbReference type="KEGG" id="spe:Spro_0069"/>
<dbReference type="eggNOG" id="COG0752">
    <property type="taxonomic scope" value="Bacteria"/>
</dbReference>
<dbReference type="HOGENOM" id="CLU_057066_1_0_6"/>
<dbReference type="OrthoDB" id="9802183at2"/>
<dbReference type="GO" id="GO:0005829">
    <property type="term" value="C:cytosol"/>
    <property type="evidence" value="ECO:0007669"/>
    <property type="project" value="TreeGrafter"/>
</dbReference>
<dbReference type="GO" id="GO:0005524">
    <property type="term" value="F:ATP binding"/>
    <property type="evidence" value="ECO:0007669"/>
    <property type="project" value="UniProtKB-UniRule"/>
</dbReference>
<dbReference type="GO" id="GO:0004820">
    <property type="term" value="F:glycine-tRNA ligase activity"/>
    <property type="evidence" value="ECO:0007669"/>
    <property type="project" value="UniProtKB-UniRule"/>
</dbReference>
<dbReference type="GO" id="GO:0006426">
    <property type="term" value="P:glycyl-tRNA aminoacylation"/>
    <property type="evidence" value="ECO:0007669"/>
    <property type="project" value="UniProtKB-UniRule"/>
</dbReference>
<dbReference type="CDD" id="cd00733">
    <property type="entry name" value="GlyRS_alpha_core"/>
    <property type="match status" value="1"/>
</dbReference>
<dbReference type="FunFam" id="1.20.58.180:FF:000001">
    <property type="entry name" value="Glycine--tRNA ligase alpha subunit"/>
    <property type="match status" value="1"/>
</dbReference>
<dbReference type="FunFam" id="3.30.930.10:FF:000006">
    <property type="entry name" value="Glycine--tRNA ligase alpha subunit"/>
    <property type="match status" value="1"/>
</dbReference>
<dbReference type="Gene3D" id="3.30.930.10">
    <property type="entry name" value="Bira Bifunctional Protein, Domain 2"/>
    <property type="match status" value="1"/>
</dbReference>
<dbReference type="Gene3D" id="1.20.58.180">
    <property type="entry name" value="Class II aaRS and biotin synthetases, domain 2"/>
    <property type="match status" value="1"/>
</dbReference>
<dbReference type="HAMAP" id="MF_00254">
    <property type="entry name" value="Gly_tRNA_synth_alpha"/>
    <property type="match status" value="1"/>
</dbReference>
<dbReference type="InterPro" id="IPR045864">
    <property type="entry name" value="aa-tRNA-synth_II/BPL/LPL"/>
</dbReference>
<dbReference type="InterPro" id="IPR006194">
    <property type="entry name" value="Gly-tRNA-synth_heterodimer"/>
</dbReference>
<dbReference type="InterPro" id="IPR002310">
    <property type="entry name" value="Gly-tRNA_ligase_asu"/>
</dbReference>
<dbReference type="NCBIfam" id="TIGR00388">
    <property type="entry name" value="glyQ"/>
    <property type="match status" value="1"/>
</dbReference>
<dbReference type="NCBIfam" id="NF006827">
    <property type="entry name" value="PRK09348.1"/>
    <property type="match status" value="1"/>
</dbReference>
<dbReference type="PANTHER" id="PTHR30075:SF2">
    <property type="entry name" value="GLYCINE--TRNA LIGASE, CHLOROPLASTIC_MITOCHONDRIAL 2"/>
    <property type="match status" value="1"/>
</dbReference>
<dbReference type="PANTHER" id="PTHR30075">
    <property type="entry name" value="GLYCYL-TRNA SYNTHETASE"/>
    <property type="match status" value="1"/>
</dbReference>
<dbReference type="Pfam" id="PF02091">
    <property type="entry name" value="tRNA-synt_2e"/>
    <property type="match status" value="1"/>
</dbReference>
<dbReference type="PRINTS" id="PR01044">
    <property type="entry name" value="TRNASYNTHGA"/>
</dbReference>
<dbReference type="SUPFAM" id="SSF55681">
    <property type="entry name" value="Class II aaRS and biotin synthetases"/>
    <property type="match status" value="1"/>
</dbReference>
<dbReference type="PROSITE" id="PS50861">
    <property type="entry name" value="AA_TRNA_LIGASE_II_GLYAB"/>
    <property type="match status" value="1"/>
</dbReference>
<evidence type="ECO:0000255" key="1">
    <source>
        <dbReference type="HAMAP-Rule" id="MF_00254"/>
    </source>
</evidence>
<accession>A8G7T9</accession>
<proteinExistence type="inferred from homology"/>